<keyword id="KW-0012">Acyltransferase</keyword>
<keyword id="KW-0963">Cytoplasm</keyword>
<keyword id="KW-0275">Fatty acid biosynthesis</keyword>
<keyword id="KW-0276">Fatty acid metabolism</keyword>
<keyword id="KW-0444">Lipid biosynthesis</keyword>
<keyword id="KW-0443">Lipid metabolism</keyword>
<keyword id="KW-0511">Multifunctional enzyme</keyword>
<keyword id="KW-0808">Transferase</keyword>
<sequence>MYSKILGTGSYLPSQIRTNADLEKMVETSDEWIVARTGIKERRIAAENETVADMGFYAAQNAIEMAGIDKNDIDLIIVATTSGSHTFPSSACQVQAKLGIKGCPAFDLAAACSGFVYALSIADQHIKTGMCKNVLVIGSDTLSKTCDPTDRSTIILFGDGAGAVVVGASEEPGILSTHIYADGEFGDLLSLEVPERGKDADKWLHMAGNEVFKVAVTQLSKLVKDTLEANGMHKSELDWLVPHQANYRIISATAKKLSMSLDQVVITLDRHGNTSAATVPTALDEAVRDGRIQRGQTLLLEAFGGGFTWGSALVRF</sequence>
<reference key="1">
    <citation type="journal article" date="2003" name="Genome Res.">
        <title>Comparative genome analysis of Vibrio vulnificus, a marine pathogen.</title>
        <authorList>
            <person name="Chen C.-Y."/>
            <person name="Wu K.-M."/>
            <person name="Chang Y.-C."/>
            <person name="Chang C.-H."/>
            <person name="Tsai H.-C."/>
            <person name="Liao T.-L."/>
            <person name="Liu Y.-M."/>
            <person name="Chen H.-J."/>
            <person name="Shen A.B.-T."/>
            <person name="Li J.-C."/>
            <person name="Su T.-L."/>
            <person name="Shao C.-P."/>
            <person name="Lee C.-T."/>
            <person name="Hor L.-I."/>
            <person name="Tsai S.-F."/>
        </authorList>
    </citation>
    <scope>NUCLEOTIDE SEQUENCE [LARGE SCALE GENOMIC DNA]</scope>
    <source>
        <strain>YJ016</strain>
    </source>
</reference>
<gene>
    <name evidence="1" type="primary">fabH1</name>
    <name type="ordered locus">VV1273</name>
</gene>
<name>FABH1_VIBVY</name>
<evidence type="ECO:0000255" key="1">
    <source>
        <dbReference type="HAMAP-Rule" id="MF_01815"/>
    </source>
</evidence>
<protein>
    <recommendedName>
        <fullName evidence="1">Beta-ketoacyl-[acyl-carrier-protein] synthase III 1</fullName>
        <shortName evidence="1">Beta-ketoacyl-ACP synthase III 1</shortName>
        <shortName evidence="1">KAS III 1</shortName>
        <ecNumber evidence="1">2.3.1.180</ecNumber>
    </recommendedName>
    <alternativeName>
        <fullName evidence="1">3-oxoacyl-[acyl-carrier-protein] synthase 3 1</fullName>
    </alternativeName>
    <alternativeName>
        <fullName evidence="1">3-oxoacyl-[acyl-carrier-protein] synthase III 1</fullName>
    </alternativeName>
</protein>
<comment type="function">
    <text evidence="1">Catalyzes the condensation reaction of fatty acid synthesis by the addition to an acyl acceptor of two carbons from malonyl-ACP. Catalyzes the first condensation reaction which initiates fatty acid synthesis and may therefore play a role in governing the total rate of fatty acid production. Possesses both acetoacetyl-ACP synthase and acetyl transacylase activities. Its substrate specificity determines the biosynthesis of branched-chain and/or straight-chain of fatty acids.</text>
</comment>
<comment type="catalytic activity">
    <reaction evidence="1">
        <text>malonyl-[ACP] + acetyl-CoA + H(+) = 3-oxobutanoyl-[ACP] + CO2 + CoA</text>
        <dbReference type="Rhea" id="RHEA:12080"/>
        <dbReference type="Rhea" id="RHEA-COMP:9623"/>
        <dbReference type="Rhea" id="RHEA-COMP:9625"/>
        <dbReference type="ChEBI" id="CHEBI:15378"/>
        <dbReference type="ChEBI" id="CHEBI:16526"/>
        <dbReference type="ChEBI" id="CHEBI:57287"/>
        <dbReference type="ChEBI" id="CHEBI:57288"/>
        <dbReference type="ChEBI" id="CHEBI:78449"/>
        <dbReference type="ChEBI" id="CHEBI:78450"/>
        <dbReference type="EC" id="2.3.1.180"/>
    </reaction>
</comment>
<comment type="pathway">
    <text evidence="1">Lipid metabolism; fatty acid biosynthesis.</text>
</comment>
<comment type="subunit">
    <text evidence="1">Homodimer.</text>
</comment>
<comment type="subcellular location">
    <subcellularLocation>
        <location evidence="1">Cytoplasm</location>
    </subcellularLocation>
</comment>
<comment type="domain">
    <text evidence="1">The last Arg residue of the ACP-binding site is essential for the weak association between ACP/AcpP and FabH.</text>
</comment>
<comment type="similarity">
    <text evidence="1">Belongs to the thiolase-like superfamily. FabH family.</text>
</comment>
<dbReference type="EC" id="2.3.1.180" evidence="1"/>
<dbReference type="EMBL" id="BA000037">
    <property type="protein sequence ID" value="BAC94037.1"/>
    <property type="molecule type" value="Genomic_DNA"/>
</dbReference>
<dbReference type="RefSeq" id="WP_011149967.1">
    <property type="nucleotide sequence ID" value="NC_005139.1"/>
</dbReference>
<dbReference type="SMR" id="Q7M7J9"/>
<dbReference type="STRING" id="672.VV93_v1c11900"/>
<dbReference type="KEGG" id="vvy:VV1273"/>
<dbReference type="eggNOG" id="COG0332">
    <property type="taxonomic scope" value="Bacteria"/>
</dbReference>
<dbReference type="HOGENOM" id="CLU_039592_4_1_6"/>
<dbReference type="UniPathway" id="UPA00094"/>
<dbReference type="Proteomes" id="UP000002675">
    <property type="component" value="Chromosome I"/>
</dbReference>
<dbReference type="GO" id="GO:0005737">
    <property type="term" value="C:cytoplasm"/>
    <property type="evidence" value="ECO:0007669"/>
    <property type="project" value="UniProtKB-SubCell"/>
</dbReference>
<dbReference type="GO" id="GO:0004315">
    <property type="term" value="F:3-oxoacyl-[acyl-carrier-protein] synthase activity"/>
    <property type="evidence" value="ECO:0007669"/>
    <property type="project" value="InterPro"/>
</dbReference>
<dbReference type="GO" id="GO:0033818">
    <property type="term" value="F:beta-ketoacyl-acyl-carrier-protein synthase III activity"/>
    <property type="evidence" value="ECO:0007669"/>
    <property type="project" value="UniProtKB-UniRule"/>
</dbReference>
<dbReference type="GO" id="GO:0006633">
    <property type="term" value="P:fatty acid biosynthetic process"/>
    <property type="evidence" value="ECO:0007669"/>
    <property type="project" value="UniProtKB-UniRule"/>
</dbReference>
<dbReference type="CDD" id="cd00830">
    <property type="entry name" value="KAS_III"/>
    <property type="match status" value="1"/>
</dbReference>
<dbReference type="FunFam" id="3.40.47.10:FF:000004">
    <property type="entry name" value="3-oxoacyl-[acyl-carrier-protein] synthase 3"/>
    <property type="match status" value="1"/>
</dbReference>
<dbReference type="Gene3D" id="3.40.47.10">
    <property type="match status" value="1"/>
</dbReference>
<dbReference type="HAMAP" id="MF_01815">
    <property type="entry name" value="FabH"/>
    <property type="match status" value="1"/>
</dbReference>
<dbReference type="InterPro" id="IPR013747">
    <property type="entry name" value="ACP_syn_III_C"/>
</dbReference>
<dbReference type="InterPro" id="IPR013751">
    <property type="entry name" value="ACP_syn_III_N"/>
</dbReference>
<dbReference type="InterPro" id="IPR004655">
    <property type="entry name" value="FabH"/>
</dbReference>
<dbReference type="InterPro" id="IPR016039">
    <property type="entry name" value="Thiolase-like"/>
</dbReference>
<dbReference type="NCBIfam" id="TIGR00747">
    <property type="entry name" value="fabH"/>
    <property type="match status" value="1"/>
</dbReference>
<dbReference type="NCBIfam" id="NF006829">
    <property type="entry name" value="PRK09352.1"/>
    <property type="match status" value="1"/>
</dbReference>
<dbReference type="PANTHER" id="PTHR43091">
    <property type="entry name" value="3-OXOACYL-[ACYL-CARRIER-PROTEIN] SYNTHASE"/>
    <property type="match status" value="1"/>
</dbReference>
<dbReference type="PANTHER" id="PTHR43091:SF1">
    <property type="entry name" value="BETA-KETOACYL-[ACYL-CARRIER-PROTEIN] SYNTHASE III, CHLOROPLASTIC"/>
    <property type="match status" value="1"/>
</dbReference>
<dbReference type="Pfam" id="PF08545">
    <property type="entry name" value="ACP_syn_III"/>
    <property type="match status" value="1"/>
</dbReference>
<dbReference type="Pfam" id="PF08541">
    <property type="entry name" value="ACP_syn_III_C"/>
    <property type="match status" value="1"/>
</dbReference>
<dbReference type="SUPFAM" id="SSF53901">
    <property type="entry name" value="Thiolase-like"/>
    <property type="match status" value="1"/>
</dbReference>
<organism>
    <name type="scientific">Vibrio vulnificus (strain YJ016)</name>
    <dbReference type="NCBI Taxonomy" id="196600"/>
    <lineage>
        <taxon>Bacteria</taxon>
        <taxon>Pseudomonadati</taxon>
        <taxon>Pseudomonadota</taxon>
        <taxon>Gammaproteobacteria</taxon>
        <taxon>Vibrionales</taxon>
        <taxon>Vibrionaceae</taxon>
        <taxon>Vibrio</taxon>
    </lineage>
</organism>
<accession>Q7M7J9</accession>
<feature type="chain" id="PRO_0000110508" description="Beta-ketoacyl-[acyl-carrier-protein] synthase III 1">
    <location>
        <begin position="1"/>
        <end position="316"/>
    </location>
</feature>
<feature type="region of interest" description="ACP-binding" evidence="1">
    <location>
        <begin position="244"/>
        <end position="248"/>
    </location>
</feature>
<feature type="active site" evidence="1">
    <location>
        <position position="112"/>
    </location>
</feature>
<feature type="active site" evidence="1">
    <location>
        <position position="243"/>
    </location>
</feature>
<feature type="active site" evidence="1">
    <location>
        <position position="273"/>
    </location>
</feature>
<proteinExistence type="inferred from homology"/>